<accession>O29622</accession>
<feature type="chain" id="PRO_0000098575" description="Isoleucine--tRNA ligase">
    <location>
        <begin position="1"/>
        <end position="1018"/>
    </location>
</feature>
<feature type="short sequence motif" description="'HIGH' region">
    <location>
        <begin position="43"/>
        <end position="53"/>
    </location>
</feature>
<feature type="short sequence motif" description="'KMSKS' region">
    <location>
        <begin position="586"/>
        <end position="590"/>
    </location>
</feature>
<feature type="binding site" evidence="1">
    <location>
        <position position="589"/>
    </location>
    <ligand>
        <name>ATP</name>
        <dbReference type="ChEBI" id="CHEBI:30616"/>
    </ligand>
</feature>
<gene>
    <name evidence="1" type="primary">ileS</name>
    <name type="ordered locus">AF_0633</name>
</gene>
<protein>
    <recommendedName>
        <fullName evidence="1">Isoleucine--tRNA ligase</fullName>
        <ecNumber evidence="1">6.1.1.5</ecNumber>
    </recommendedName>
    <alternativeName>
        <fullName evidence="1">Isoleucyl-tRNA synthetase</fullName>
        <shortName evidence="1">IleRS</shortName>
    </alternativeName>
</protein>
<keyword id="KW-0030">Aminoacyl-tRNA synthetase</keyword>
<keyword id="KW-0067">ATP-binding</keyword>
<keyword id="KW-0963">Cytoplasm</keyword>
<keyword id="KW-0436">Ligase</keyword>
<keyword id="KW-0479">Metal-binding</keyword>
<keyword id="KW-0547">Nucleotide-binding</keyword>
<keyword id="KW-0648">Protein biosynthesis</keyword>
<keyword id="KW-1185">Reference proteome</keyword>
<keyword id="KW-0862">Zinc</keyword>
<proteinExistence type="inferred from homology"/>
<organism>
    <name type="scientific">Archaeoglobus fulgidus (strain ATCC 49558 / DSM 4304 / JCM 9628 / NBRC 100126 / VC-16)</name>
    <dbReference type="NCBI Taxonomy" id="224325"/>
    <lineage>
        <taxon>Archaea</taxon>
        <taxon>Methanobacteriati</taxon>
        <taxon>Methanobacteriota</taxon>
        <taxon>Archaeoglobi</taxon>
        <taxon>Archaeoglobales</taxon>
        <taxon>Archaeoglobaceae</taxon>
        <taxon>Archaeoglobus</taxon>
    </lineage>
</organism>
<reference key="1">
    <citation type="journal article" date="1997" name="Nature">
        <title>The complete genome sequence of the hyperthermophilic, sulphate-reducing archaeon Archaeoglobus fulgidus.</title>
        <authorList>
            <person name="Klenk H.-P."/>
            <person name="Clayton R.A."/>
            <person name="Tomb J.-F."/>
            <person name="White O."/>
            <person name="Nelson K.E."/>
            <person name="Ketchum K.A."/>
            <person name="Dodson R.J."/>
            <person name="Gwinn M.L."/>
            <person name="Hickey E.K."/>
            <person name="Peterson J.D."/>
            <person name="Richardson D.L."/>
            <person name="Kerlavage A.R."/>
            <person name="Graham D.E."/>
            <person name="Kyrpides N.C."/>
            <person name="Fleischmann R.D."/>
            <person name="Quackenbush J."/>
            <person name="Lee N.H."/>
            <person name="Sutton G.G."/>
            <person name="Gill S.R."/>
            <person name="Kirkness E.F."/>
            <person name="Dougherty B.A."/>
            <person name="McKenney K."/>
            <person name="Adams M.D."/>
            <person name="Loftus B.J."/>
            <person name="Peterson S.N."/>
            <person name="Reich C.I."/>
            <person name="McNeil L.K."/>
            <person name="Badger J.H."/>
            <person name="Glodek A."/>
            <person name="Zhou L."/>
            <person name="Overbeek R."/>
            <person name="Gocayne J.D."/>
            <person name="Weidman J.F."/>
            <person name="McDonald L.A."/>
            <person name="Utterback T.R."/>
            <person name="Cotton M.D."/>
            <person name="Spriggs T."/>
            <person name="Artiach P."/>
            <person name="Kaine B.P."/>
            <person name="Sykes S.M."/>
            <person name="Sadow P.W."/>
            <person name="D'Andrea K.P."/>
            <person name="Bowman C."/>
            <person name="Fujii C."/>
            <person name="Garland S.A."/>
            <person name="Mason T.M."/>
            <person name="Olsen G.J."/>
            <person name="Fraser C.M."/>
            <person name="Smith H.O."/>
            <person name="Woese C.R."/>
            <person name="Venter J.C."/>
        </authorList>
    </citation>
    <scope>NUCLEOTIDE SEQUENCE [LARGE SCALE GENOMIC DNA]</scope>
    <source>
        <strain>ATCC 49558 / DSM 4304 / JCM 9628 / NBRC 100126 / VC-16</strain>
    </source>
</reference>
<name>SYI_ARCFU</name>
<dbReference type="EC" id="6.1.1.5" evidence="1"/>
<dbReference type="EMBL" id="AE000782">
    <property type="protein sequence ID" value="AAB90608.1"/>
    <property type="molecule type" value="Genomic_DNA"/>
</dbReference>
<dbReference type="PIR" id="A69329">
    <property type="entry name" value="A69329"/>
</dbReference>
<dbReference type="RefSeq" id="WP_010878137.1">
    <property type="nucleotide sequence ID" value="NC_000917.1"/>
</dbReference>
<dbReference type="SMR" id="O29622"/>
<dbReference type="STRING" id="224325.AF_0633"/>
<dbReference type="PaxDb" id="224325-AF_0633"/>
<dbReference type="EnsemblBacteria" id="AAB90608">
    <property type="protein sequence ID" value="AAB90608"/>
    <property type="gene ID" value="AF_0633"/>
</dbReference>
<dbReference type="GeneID" id="1483851"/>
<dbReference type="KEGG" id="afu:AF_0633"/>
<dbReference type="eggNOG" id="arCOG00807">
    <property type="taxonomic scope" value="Archaea"/>
</dbReference>
<dbReference type="HOGENOM" id="CLU_001493_1_1_2"/>
<dbReference type="OrthoDB" id="30823at2157"/>
<dbReference type="PhylomeDB" id="O29622"/>
<dbReference type="Proteomes" id="UP000002199">
    <property type="component" value="Chromosome"/>
</dbReference>
<dbReference type="GO" id="GO:0005737">
    <property type="term" value="C:cytoplasm"/>
    <property type="evidence" value="ECO:0007669"/>
    <property type="project" value="UniProtKB-SubCell"/>
</dbReference>
<dbReference type="GO" id="GO:0002161">
    <property type="term" value="F:aminoacyl-tRNA deacylase activity"/>
    <property type="evidence" value="ECO:0007669"/>
    <property type="project" value="InterPro"/>
</dbReference>
<dbReference type="GO" id="GO:0005524">
    <property type="term" value="F:ATP binding"/>
    <property type="evidence" value="ECO:0007669"/>
    <property type="project" value="UniProtKB-UniRule"/>
</dbReference>
<dbReference type="GO" id="GO:0004822">
    <property type="term" value="F:isoleucine-tRNA ligase activity"/>
    <property type="evidence" value="ECO:0007669"/>
    <property type="project" value="UniProtKB-UniRule"/>
</dbReference>
<dbReference type="GO" id="GO:0000049">
    <property type="term" value="F:tRNA binding"/>
    <property type="evidence" value="ECO:0007669"/>
    <property type="project" value="InterPro"/>
</dbReference>
<dbReference type="GO" id="GO:0008270">
    <property type="term" value="F:zinc ion binding"/>
    <property type="evidence" value="ECO:0007669"/>
    <property type="project" value="UniProtKB-UniRule"/>
</dbReference>
<dbReference type="GO" id="GO:0006428">
    <property type="term" value="P:isoleucyl-tRNA aminoacylation"/>
    <property type="evidence" value="ECO:0007669"/>
    <property type="project" value="UniProtKB-UniRule"/>
</dbReference>
<dbReference type="CDD" id="cd07961">
    <property type="entry name" value="Anticodon_Ia_Ile_ABEc"/>
    <property type="match status" value="1"/>
</dbReference>
<dbReference type="CDD" id="cd00818">
    <property type="entry name" value="IleRS_core"/>
    <property type="match status" value="1"/>
</dbReference>
<dbReference type="FunFam" id="3.40.50.620:FF:000286">
    <property type="entry name" value="Isoleucine--tRNA ligase"/>
    <property type="match status" value="1"/>
</dbReference>
<dbReference type="Gene3D" id="3.40.50.620">
    <property type="entry name" value="HUPs"/>
    <property type="match status" value="2"/>
</dbReference>
<dbReference type="Gene3D" id="1.10.730.10">
    <property type="entry name" value="Isoleucyl-tRNA Synthetase, Domain 1"/>
    <property type="match status" value="1"/>
</dbReference>
<dbReference type="HAMAP" id="MF_02003">
    <property type="entry name" value="Ile_tRNA_synth_type2"/>
    <property type="match status" value="1"/>
</dbReference>
<dbReference type="InterPro" id="IPR001412">
    <property type="entry name" value="aa-tRNA-synth_I_CS"/>
</dbReference>
<dbReference type="InterPro" id="IPR002300">
    <property type="entry name" value="aa-tRNA-synth_Ia"/>
</dbReference>
<dbReference type="InterPro" id="IPR033709">
    <property type="entry name" value="Anticodon_Ile_ABEc"/>
</dbReference>
<dbReference type="InterPro" id="IPR002301">
    <property type="entry name" value="Ile-tRNA-ligase"/>
</dbReference>
<dbReference type="InterPro" id="IPR023586">
    <property type="entry name" value="Ile-tRNA-ligase_type2"/>
</dbReference>
<dbReference type="InterPro" id="IPR013155">
    <property type="entry name" value="M/V/L/I-tRNA-synth_anticd-bd"/>
</dbReference>
<dbReference type="InterPro" id="IPR014729">
    <property type="entry name" value="Rossmann-like_a/b/a_fold"/>
</dbReference>
<dbReference type="InterPro" id="IPR009080">
    <property type="entry name" value="tRNAsynth_Ia_anticodon-bd"/>
</dbReference>
<dbReference type="InterPro" id="IPR009008">
    <property type="entry name" value="Val/Leu/Ile-tRNA-synth_edit"/>
</dbReference>
<dbReference type="NCBIfam" id="TIGR00392">
    <property type="entry name" value="ileS"/>
    <property type="match status" value="1"/>
</dbReference>
<dbReference type="PANTHER" id="PTHR42780:SF1">
    <property type="entry name" value="ISOLEUCINE--TRNA LIGASE, CYTOPLASMIC"/>
    <property type="match status" value="1"/>
</dbReference>
<dbReference type="PANTHER" id="PTHR42780">
    <property type="entry name" value="SOLEUCYL-TRNA SYNTHETASE"/>
    <property type="match status" value="1"/>
</dbReference>
<dbReference type="Pfam" id="PF08264">
    <property type="entry name" value="Anticodon_1"/>
    <property type="match status" value="1"/>
</dbReference>
<dbReference type="Pfam" id="PF19302">
    <property type="entry name" value="DUF5915"/>
    <property type="match status" value="1"/>
</dbReference>
<dbReference type="Pfam" id="PF00133">
    <property type="entry name" value="tRNA-synt_1"/>
    <property type="match status" value="1"/>
</dbReference>
<dbReference type="PRINTS" id="PR00984">
    <property type="entry name" value="TRNASYNTHILE"/>
</dbReference>
<dbReference type="SUPFAM" id="SSF47323">
    <property type="entry name" value="Anticodon-binding domain of a subclass of class I aminoacyl-tRNA synthetases"/>
    <property type="match status" value="1"/>
</dbReference>
<dbReference type="SUPFAM" id="SSF52374">
    <property type="entry name" value="Nucleotidylyl transferase"/>
    <property type="match status" value="1"/>
</dbReference>
<dbReference type="SUPFAM" id="SSF50677">
    <property type="entry name" value="ValRS/IleRS/LeuRS editing domain"/>
    <property type="match status" value="1"/>
</dbReference>
<dbReference type="PROSITE" id="PS00178">
    <property type="entry name" value="AA_TRNA_LIGASE_I"/>
    <property type="match status" value="1"/>
</dbReference>
<comment type="function">
    <text evidence="1">Catalyzes the attachment of isoleucine to tRNA(Ile). As IleRS can inadvertently accommodate and process structurally similar amino acids such as valine, to avoid such errors it has two additional distinct tRNA(Ile)-dependent editing activities. One activity is designated as 'pretransfer' editing and involves the hydrolysis of activated Val-AMP. The other activity is designated 'posttransfer' editing and involves deacylation of mischarged Val-tRNA(Ile).</text>
</comment>
<comment type="catalytic activity">
    <reaction evidence="1">
        <text>tRNA(Ile) + L-isoleucine + ATP = L-isoleucyl-tRNA(Ile) + AMP + diphosphate</text>
        <dbReference type="Rhea" id="RHEA:11060"/>
        <dbReference type="Rhea" id="RHEA-COMP:9666"/>
        <dbReference type="Rhea" id="RHEA-COMP:9695"/>
        <dbReference type="ChEBI" id="CHEBI:30616"/>
        <dbReference type="ChEBI" id="CHEBI:33019"/>
        <dbReference type="ChEBI" id="CHEBI:58045"/>
        <dbReference type="ChEBI" id="CHEBI:78442"/>
        <dbReference type="ChEBI" id="CHEBI:78528"/>
        <dbReference type="ChEBI" id="CHEBI:456215"/>
        <dbReference type="EC" id="6.1.1.5"/>
    </reaction>
</comment>
<comment type="cofactor">
    <cofactor evidence="1">
        <name>Zn(2+)</name>
        <dbReference type="ChEBI" id="CHEBI:29105"/>
    </cofactor>
</comment>
<comment type="subunit">
    <text evidence="1">Monomer.</text>
</comment>
<comment type="subcellular location">
    <subcellularLocation>
        <location evidence="1">Cytoplasm</location>
    </subcellularLocation>
</comment>
<comment type="domain">
    <text evidence="1">IleRS has two distinct active sites: one for aminoacylation and one for editing. The misactivated valine is translocated from the active site to the editing site, which sterically excludes the correctly activated isoleucine. The single editing site contains two valyl binding pockets, one specific for each substrate (Val-AMP or Val-tRNA(Ile)).</text>
</comment>
<comment type="similarity">
    <text evidence="1">Belongs to the class-I aminoacyl-tRNA synthetase family. IleS type 2 subfamily.</text>
</comment>
<sequence length="1018" mass="118885">MLPAKYSPKDVESEIFKFWEDNDIYRKVKEKGGRKFYFVDGPPYTTGRIHLGTAWNKVLKDTILRYKRMMGFAPTDTPGWDMHGLPIEVKVEQELGFRTKRDIESFGIDKFIERCMNYALANKDAMTEQFKSLAVWMDWENPYMTIKAEYMNAAWFAIKRAHERGLLERKKMVVNWCHRCETALADAEVEYWDEEDPSIYVKFPVKGEKDTYIVIWTTTPWTLPANMAVAVHPSLEYAKFRAVKDGKVEYLILAKELADSVLGKGDYDSWEVVETYLGEDLEGLEYEHPLADEVPLQKNWKHQVFFADFVTAENTGCVHIAPGHGVEDYELGVEKGLEVFNPVDDRGVYTEEAGKYAGKHVKEANDDIIDDLYRKDLLLAEERIVHRYGHCWRCKTPIIYRATEQWFIKISELKDEMLEEIDKVMWIPEWAGSARFKDWVSNAKDWCISRQRYWGIPIPVWICEKCGEMKVVGSINEIEWENDLDLHRPKIDAVTFSCQCGGVMRRVPDVFDVWFDSGVASWGSIAYPLRKDKFEELWPADFITEGHDQTRGWFYSQLGTSVVCFDKAPYKAVLMHGFTLDEQGRKMSKSLGNVVEPEEVVGQIGVDGFRLYVLYSAPWEDLRFSWEEARNINRMLNVVWNAVRFAHTYMSLDNYSFGEKGELKIEDRWILSRLESFIKEANEAMEGYQVHRVVRAFFDFFVEDFSRWYIQIIRPRVWEERDSPSKLAAYYTMFRVIDRSLRAIAPFAPLIAEWFYQHVVKEFREGEESIFMEEYSTAEVEMIDGELEAAMKVAKEIVEAAANARNKAKRKLRWPLRELVIESGSEKVRKAVEMLEETILSQCNVKQVRVVDSFEKEIEIKPNYKYIGPLLKEKAGEFAKYVASLKEIPEKLVFDGVELDPKQAIVVDYRLPEGYEYAEFSGGVVYIYKELDDELVREAFAREVIRRIQEMRKELDLDVEEFIETTVEMDAELVKGWEDYIKSETRSQKLVFGKAEGYVREWNIEGKKVKIGIKRLRG</sequence>
<evidence type="ECO:0000255" key="1">
    <source>
        <dbReference type="HAMAP-Rule" id="MF_02003"/>
    </source>
</evidence>